<accession>O30086</accession>
<feature type="chain" id="PRO_0000127841" description="Uncharacterized protein AF_0151">
    <location>
        <begin position="1"/>
        <end position="100"/>
    </location>
</feature>
<protein>
    <recommendedName>
        <fullName>Uncharacterized protein AF_0151</fullName>
    </recommendedName>
</protein>
<reference key="1">
    <citation type="journal article" date="1997" name="Nature">
        <title>The complete genome sequence of the hyperthermophilic, sulphate-reducing archaeon Archaeoglobus fulgidus.</title>
        <authorList>
            <person name="Klenk H.-P."/>
            <person name="Clayton R.A."/>
            <person name="Tomb J.-F."/>
            <person name="White O."/>
            <person name="Nelson K.E."/>
            <person name="Ketchum K.A."/>
            <person name="Dodson R.J."/>
            <person name="Gwinn M.L."/>
            <person name="Hickey E.K."/>
            <person name="Peterson J.D."/>
            <person name="Richardson D.L."/>
            <person name="Kerlavage A.R."/>
            <person name="Graham D.E."/>
            <person name="Kyrpides N.C."/>
            <person name="Fleischmann R.D."/>
            <person name="Quackenbush J."/>
            <person name="Lee N.H."/>
            <person name="Sutton G.G."/>
            <person name="Gill S.R."/>
            <person name="Kirkness E.F."/>
            <person name="Dougherty B.A."/>
            <person name="McKenney K."/>
            <person name="Adams M.D."/>
            <person name="Loftus B.J."/>
            <person name="Peterson S.N."/>
            <person name="Reich C.I."/>
            <person name="McNeil L.K."/>
            <person name="Badger J.H."/>
            <person name="Glodek A."/>
            <person name="Zhou L."/>
            <person name="Overbeek R."/>
            <person name="Gocayne J.D."/>
            <person name="Weidman J.F."/>
            <person name="McDonald L.A."/>
            <person name="Utterback T.R."/>
            <person name="Cotton M.D."/>
            <person name="Spriggs T."/>
            <person name="Artiach P."/>
            <person name="Kaine B.P."/>
            <person name="Sykes S.M."/>
            <person name="Sadow P.W."/>
            <person name="D'Andrea K.P."/>
            <person name="Bowman C."/>
            <person name="Fujii C."/>
            <person name="Garland S.A."/>
            <person name="Mason T.M."/>
            <person name="Olsen G.J."/>
            <person name="Fraser C.M."/>
            <person name="Smith H.O."/>
            <person name="Woese C.R."/>
            <person name="Venter J.C."/>
        </authorList>
    </citation>
    <scope>NUCLEOTIDE SEQUENCE [LARGE SCALE GENOMIC DNA]</scope>
    <source>
        <strain>ATCC 49558 / DSM 4304 / JCM 9628 / NBRC 100126 / VC-16</strain>
    </source>
</reference>
<organism>
    <name type="scientific">Archaeoglobus fulgidus (strain ATCC 49558 / DSM 4304 / JCM 9628 / NBRC 100126 / VC-16)</name>
    <dbReference type="NCBI Taxonomy" id="224325"/>
    <lineage>
        <taxon>Archaea</taxon>
        <taxon>Methanobacteriati</taxon>
        <taxon>Methanobacteriota</taxon>
        <taxon>Archaeoglobi</taxon>
        <taxon>Archaeoglobales</taxon>
        <taxon>Archaeoglobaceae</taxon>
        <taxon>Archaeoglobus</taxon>
    </lineage>
</organism>
<keyword id="KW-1185">Reference proteome</keyword>
<gene>
    <name type="ordered locus">AF_0151</name>
</gene>
<sequence>MRSLSMTIMFMHPSTPLQLLLHPPVLLLAYLSPRIPLLEDFEGGFLSRRFALPQNDVYNQKKNPEHRNYDEDEPQQPVHSPFLCILIHEIGQNQPRNPPY</sequence>
<name>Y151_ARCFU</name>
<dbReference type="EMBL" id="AE000782">
    <property type="protein sequence ID" value="AAB91086.1"/>
    <property type="molecule type" value="Genomic_DNA"/>
</dbReference>
<dbReference type="PIR" id="G69268">
    <property type="entry name" value="G69268"/>
</dbReference>
<dbReference type="STRING" id="224325.AF_0151"/>
<dbReference type="PaxDb" id="224325-AF_0151"/>
<dbReference type="EnsemblBacteria" id="AAB91086">
    <property type="protein sequence ID" value="AAB91086"/>
    <property type="gene ID" value="AF_0151"/>
</dbReference>
<dbReference type="KEGG" id="afu:AF_0151"/>
<dbReference type="HOGENOM" id="CLU_2299185_0_0_2"/>
<dbReference type="Proteomes" id="UP000002199">
    <property type="component" value="Chromosome"/>
</dbReference>
<proteinExistence type="predicted"/>